<reference key="1">
    <citation type="journal article" date="1991" name="Virology">
        <title>Isolation of replication-competent molecular clones of visna virus.</title>
        <authorList>
            <person name="Staskus K.A."/>
            <person name="Retzel E.F."/>
            <person name="Lewis E.D."/>
            <person name="Wietgrefe S.W."/>
            <person name="Silsby J.L."/>
            <person name="Cyr S."/>
            <person name="Rank J.M."/>
            <person name="Haase A.T."/>
            <person name="Fast D."/>
            <person name="Geiser P.T."/>
            <person name="Harty J.T."/>
            <person name="Kong S.H."/>
            <person name="Cook R."/>
            <person name="Lahti C.J."/>
            <person name="Neufeld T.P."/>
            <person name="Porter T.E."/>
            <person name="Shoop E."/>
            <person name="Zachow K.R."/>
        </authorList>
    </citation>
    <scope>NUCLEOTIDE SEQUENCE [GENOMIC RNA]</scope>
</reference>
<organismHost>
    <name type="scientific">Ovis aries</name>
    <name type="common">Sheep</name>
    <dbReference type="NCBI Taxonomy" id="9940"/>
</organismHost>
<proteinExistence type="inferred from homology"/>
<comment type="function">
    <molecule>Gag polyprotein</molecule>
    <text evidence="1">Mediates, with Gag-Pol polyprotein, the essential events in virion assembly, including binding the plasma membrane, making the protein-protein interactions necessary to create spherical particles, recruiting the viral Env proteins, and packaging the genomic RNA via direct interactions with the RNA packaging sequence.</text>
</comment>
<comment type="function">
    <molecule>Matrix protein p16</molecule>
    <text evidence="2">Targets the polyprotein to the plasma membrane.</text>
</comment>
<comment type="function">
    <molecule>Capsid protein p25</molecule>
    <text evidence="1">Forms the core that encapsulates the genomic RNA-nucleocapsid complex in the virion.</text>
</comment>
<comment type="function">
    <molecule>Nucleocapsid protein p14</molecule>
    <text evidence="1">Encapsulates and protects viral dimeric unspliced genomic RNA (gRNA). Binds these RNAs through its zinc fingers. Acts as a nucleic acid chaperone which is involved in rearrangement of nucleic acid secondary structure during gRNA retrotranscription. Also facilitates template switch leading to recombination.</text>
</comment>
<comment type="subcellular location">
    <molecule>Matrix protein p16</molecule>
    <subcellularLocation>
        <location evidence="7">Virion</location>
    </subcellularLocation>
</comment>
<comment type="subcellular location">
    <molecule>Capsid protein p25</molecule>
    <subcellularLocation>
        <location evidence="7">Virion</location>
    </subcellularLocation>
</comment>
<comment type="subcellular location">
    <molecule>Nucleocapsid protein p14</molecule>
    <subcellularLocation>
        <location evidence="7">Virion</location>
    </subcellularLocation>
</comment>
<comment type="alternative products">
    <event type="ribosomal frameshifting"/>
    <isoform>
        <id>P23424-1</id>
        <name>Gag polyprotein</name>
        <sequence type="displayed"/>
    </isoform>
    <isoform>
        <id>P23426-1</id>
        <name>Gag-Pol polyprotein</name>
        <sequence type="external"/>
    </isoform>
</comment>
<comment type="domain">
    <text evidence="7">Late-budding domains (L domains) are short sequence motifs essential for viral particle budding. They recruit proteins of the host ESCRT machinery (Endosomal Sorting Complex Required for Transport) or ESCRT-associated proteins. Nucleocapsid protein p14 contains one L domain: a PTAP/PSAP motif, which interacts with the UEV domain of TSG101.</text>
</comment>
<comment type="PTM">
    <molecule>Gag polyprotein</molecule>
    <text evidence="7">Specific enzymatic cleavages by the viral protease yield mature proteins.</text>
</comment>
<comment type="miscellaneous">
    <molecule>Isoform Gag polyprotein</molecule>
    <text evidence="4">Produced by conventional translation.</text>
</comment>
<comment type="similarity">
    <text evidence="7">Belongs to the Ovine/caprine lentivirus group gag polyprotein family.</text>
</comment>
<comment type="sequence caution" evidence="7">
    <conflict type="erroneous initiation">
        <sequence resource="EMBL-CDS" id="AAA17523"/>
    </conflict>
    <text>Extended N-terminus.</text>
</comment>
<keyword id="KW-0167">Capsid protein</keyword>
<keyword id="KW-0945">Host-virus interaction</keyword>
<keyword id="KW-0479">Metal-binding</keyword>
<keyword id="KW-0677">Repeat</keyword>
<keyword id="KW-0688">Ribosomal frameshifting</keyword>
<keyword id="KW-1198">Viral budding</keyword>
<keyword id="KW-1187">Viral budding via the host ESCRT complexes</keyword>
<keyword id="KW-1188">Viral release from host cell</keyword>
<keyword id="KW-0946">Virion</keyword>
<keyword id="KW-0862">Zinc</keyword>
<keyword id="KW-0863">Zinc-finger</keyword>
<dbReference type="EMBL" id="M60609">
    <property type="protein sequence ID" value="AAA17523.1"/>
    <property type="status" value="ALT_INIT"/>
    <property type="molecule type" value="Unassigned_RNA"/>
</dbReference>
<dbReference type="SMR" id="P23424"/>
<dbReference type="GO" id="GO:0019028">
    <property type="term" value="C:viral capsid"/>
    <property type="evidence" value="ECO:0007669"/>
    <property type="project" value="UniProtKB-KW"/>
</dbReference>
<dbReference type="GO" id="GO:0003676">
    <property type="term" value="F:nucleic acid binding"/>
    <property type="evidence" value="ECO:0007669"/>
    <property type="project" value="InterPro"/>
</dbReference>
<dbReference type="GO" id="GO:0008270">
    <property type="term" value="F:zinc ion binding"/>
    <property type="evidence" value="ECO:0007669"/>
    <property type="project" value="UniProtKB-KW"/>
</dbReference>
<dbReference type="GO" id="GO:0039702">
    <property type="term" value="P:viral budding via host ESCRT complex"/>
    <property type="evidence" value="ECO:0007669"/>
    <property type="project" value="UniProtKB-KW"/>
</dbReference>
<dbReference type="GO" id="GO:0075523">
    <property type="term" value="P:viral translational frameshifting"/>
    <property type="evidence" value="ECO:0007669"/>
    <property type="project" value="UniProtKB-KW"/>
</dbReference>
<dbReference type="Gene3D" id="1.10.1200.30">
    <property type="match status" value="1"/>
</dbReference>
<dbReference type="Gene3D" id="1.10.375.10">
    <property type="entry name" value="Human Immunodeficiency Virus Type 1 Capsid Protein"/>
    <property type="match status" value="1"/>
</dbReference>
<dbReference type="Gene3D" id="4.10.60.10">
    <property type="entry name" value="Zinc finger, CCHC-type"/>
    <property type="match status" value="1"/>
</dbReference>
<dbReference type="InterPro" id="IPR045345">
    <property type="entry name" value="Gag_p24_C"/>
</dbReference>
<dbReference type="InterPro" id="IPR050195">
    <property type="entry name" value="Primate_lentivir_Gag_pol-like"/>
</dbReference>
<dbReference type="InterPro" id="IPR008916">
    <property type="entry name" value="Retrov_capsid_C"/>
</dbReference>
<dbReference type="InterPro" id="IPR008919">
    <property type="entry name" value="Retrov_capsid_N"/>
</dbReference>
<dbReference type="InterPro" id="IPR001878">
    <property type="entry name" value="Znf_CCHC"/>
</dbReference>
<dbReference type="InterPro" id="IPR036875">
    <property type="entry name" value="Znf_CCHC_sf"/>
</dbReference>
<dbReference type="PANTHER" id="PTHR40389:SF4">
    <property type="match status" value="1"/>
</dbReference>
<dbReference type="PANTHER" id="PTHR40389">
    <property type="entry name" value="ENDOGENOUS RETROVIRUS GROUP K MEMBER 24 GAG POLYPROTEIN-RELATED"/>
    <property type="match status" value="1"/>
</dbReference>
<dbReference type="Pfam" id="PF00607">
    <property type="entry name" value="Gag_p24"/>
    <property type="match status" value="1"/>
</dbReference>
<dbReference type="Pfam" id="PF19317">
    <property type="entry name" value="Gag_p24_C"/>
    <property type="match status" value="1"/>
</dbReference>
<dbReference type="Pfam" id="PF00098">
    <property type="entry name" value="zf-CCHC"/>
    <property type="match status" value="2"/>
</dbReference>
<dbReference type="SMART" id="SM00343">
    <property type="entry name" value="ZnF_C2HC"/>
    <property type="match status" value="2"/>
</dbReference>
<dbReference type="SUPFAM" id="SSF47353">
    <property type="entry name" value="Retrovirus capsid dimerization domain-like"/>
    <property type="match status" value="1"/>
</dbReference>
<dbReference type="SUPFAM" id="SSF47943">
    <property type="entry name" value="Retrovirus capsid protein, N-terminal core domain"/>
    <property type="match status" value="1"/>
</dbReference>
<dbReference type="SUPFAM" id="SSF57756">
    <property type="entry name" value="Retrovirus zinc finger-like domains"/>
    <property type="match status" value="1"/>
</dbReference>
<dbReference type="PROSITE" id="PS50158">
    <property type="entry name" value="ZF_CCHC"/>
    <property type="match status" value="2"/>
</dbReference>
<accession>P23424</accession>
<name>GAG_VILV1</name>
<feature type="chain" id="PRO_0000443356" description="Gag polyprotein">
    <location>
        <begin position="1"/>
        <end position="442"/>
    </location>
</feature>
<feature type="chain" id="PRO_0000038802" description="Matrix protein p16">
    <location>
        <begin position="1"/>
        <end position="143"/>
    </location>
</feature>
<feature type="chain" id="PRO_0000038803" description="Capsid protein p25">
    <location>
        <begin position="144"/>
        <end position="363"/>
    </location>
</feature>
<feature type="chain" id="PRO_0000038804" description="Nucleocapsid protein p14">
    <location>
        <begin position="364"/>
        <end position="442"/>
    </location>
</feature>
<feature type="zinc finger region" description="CCHC-type 1" evidence="5">
    <location>
        <begin position="385"/>
        <end position="402"/>
    </location>
</feature>
<feature type="zinc finger region" description="CCHC-type 2" evidence="5">
    <location>
        <begin position="404"/>
        <end position="421"/>
    </location>
</feature>
<feature type="region of interest" description="Disordered" evidence="6">
    <location>
        <begin position="420"/>
        <end position="442"/>
    </location>
</feature>
<feature type="short sequence motif" description="PTAP/PSAP motif">
    <location>
        <begin position="436"/>
        <end position="439"/>
    </location>
</feature>
<feature type="site" description="Cleavage; by viral protease" evidence="3">
    <location>
        <begin position="363"/>
        <end position="364"/>
    </location>
</feature>
<protein>
    <recommendedName>
        <fullName>Gag polyprotein</fullName>
    </recommendedName>
    <component>
        <recommendedName>
            <fullName>Matrix protein p16</fullName>
        </recommendedName>
    </component>
    <component>
        <recommendedName>
            <fullName>Capsid protein p25</fullName>
        </recommendedName>
    </component>
    <component>
        <recommendedName>
            <fullName>Nucleocapsid protein p14</fullName>
        </recommendedName>
    </component>
</protein>
<organism>
    <name type="scientific">Maedi visna virus (strain 1514 / clone LV1-1KS1)</name>
    <name type="common">MVV</name>
    <name type="synonym">Visna lentivirus</name>
    <dbReference type="NCBI Taxonomy" id="11743"/>
    <lineage>
        <taxon>Viruses</taxon>
        <taxon>Riboviria</taxon>
        <taxon>Pararnavirae</taxon>
        <taxon>Artverviricota</taxon>
        <taxon>Revtraviricetes</taxon>
        <taxon>Ortervirales</taxon>
        <taxon>Retroviridae</taxon>
        <taxon>Orthoretrovirinae</taxon>
        <taxon>Lentivirus</taxon>
        <taxon>Visna-maedi virus</taxon>
    </lineage>
</organism>
<sequence>MAKQGSKEKKGYPELKEVIKATCKIRVGPGKETLTEGNCLWALKTIDFIFEDLKTEPWTITKMYTVWDRLKGLTPEETSKREFASLQATLACIMCSQMGMKPETVQAAKGIISMKEGLQENKEAKGEKVEQLYPNLEKHREVYPIVNLQAGGRSWKAVESVVFQQLQTVAMQHGLVSEDFERQLAYYATTWTSKDILEVLAMMPGNRAQKELIQGKLNEEAERWVRQNPPGPNVLTVDQIMGVGQTNQQASQANMDQARQICRQWVITALRSVRHMSHRPGNPMLVKQKNTESYEDFIARLLEAIDAEPVTDPIKTYLKVTLSYTNASTDCQKQMDRTLGTRVQQATVEEKMQACRDVGSEGFKMQLLAQALRPQGKAGHKGVNQKCYNCGKPGHLARQCRQGIICHHCGKRGHMQKDCRQKKQQGNNRRGPRVVPSAPPML</sequence>
<evidence type="ECO:0000250" key="1">
    <source>
        <dbReference type="UniProtKB" id="P04585"/>
    </source>
</evidence>
<evidence type="ECO:0000250" key="2">
    <source>
        <dbReference type="UniProtKB" id="P12497"/>
    </source>
</evidence>
<evidence type="ECO:0000250" key="3">
    <source>
        <dbReference type="UniProtKB" id="P35955"/>
    </source>
</evidence>
<evidence type="ECO:0000250" key="4">
    <source>
        <dbReference type="UniProtKB" id="P35956"/>
    </source>
</evidence>
<evidence type="ECO:0000255" key="5">
    <source>
        <dbReference type="PROSITE-ProRule" id="PRU00047"/>
    </source>
</evidence>
<evidence type="ECO:0000256" key="6">
    <source>
        <dbReference type="SAM" id="MobiDB-lite"/>
    </source>
</evidence>
<evidence type="ECO:0000305" key="7"/>
<gene>
    <name type="primary">gag</name>
</gene>